<protein>
    <recommendedName>
        <fullName>BTB and MATH domain-containing protein 39</fullName>
    </recommendedName>
</protein>
<sequence>MSILQPLEDLSANIVTLVFNIYNFEHLDGSYTSDLKEHNGIYWCVRIQSNKAAKSQKRRVSIYLVCNPNNSSPDWSVTTSFGFRIINSWGKSRNKISTLFNHTFTSNETSKGTSGYCTWDELTAANSGFLVEGRFQIEFDLNVNSSTGIRKEKISKEKYEKYIADGELITDGKTVKVCLALLADNSPILYNLFYVEKPGQTTFHIFDFTYEAILGMVSILQLDSFEVSVYNYRDLLELGQRYQIPSVTDKCEEFLLKTRYVSIETKLKLSEIFELHYLQFRTLERVTCIHHIDNILDDHMDIGEKTYDALLEKMKHLKTQEDGQLCSCKRNHVR</sequence>
<feature type="chain" id="PRO_0000246700" description="BTB and MATH domain-containing protein 39">
    <location>
        <begin position="1"/>
        <end position="334"/>
    </location>
</feature>
<feature type="domain" description="MATH" evidence="1">
    <location>
        <begin position="14"/>
        <end position="141"/>
    </location>
</feature>
<feature type="domain" description="BTB">
    <location>
        <begin position="164"/>
        <end position="229"/>
    </location>
</feature>
<gene>
    <name type="primary">bath-39</name>
    <name type="ORF">F25H9.4</name>
</gene>
<reference key="1">
    <citation type="journal article" date="1998" name="Science">
        <title>Genome sequence of the nematode C. elegans: a platform for investigating biology.</title>
        <authorList>
            <consortium name="The C. elegans sequencing consortium"/>
        </authorList>
    </citation>
    <scope>NUCLEOTIDE SEQUENCE [LARGE SCALE GENOMIC DNA]</scope>
    <source>
        <strain>Bristol N2</strain>
    </source>
</reference>
<proteinExistence type="predicted"/>
<dbReference type="EMBL" id="Z81069">
    <property type="protein sequence ID" value="CAB02991.2"/>
    <property type="molecule type" value="Genomic_DNA"/>
</dbReference>
<dbReference type="PIR" id="T21374">
    <property type="entry name" value="T21374"/>
</dbReference>
<dbReference type="RefSeq" id="NP_506339.2">
    <property type="nucleotide sequence ID" value="NM_073938.5"/>
</dbReference>
<dbReference type="SMR" id="P90846"/>
<dbReference type="FunCoup" id="P90846">
    <property type="interactions" value="1"/>
</dbReference>
<dbReference type="PaxDb" id="6239-F25H9.4"/>
<dbReference type="EnsemblMetazoa" id="F25H9.4.1">
    <property type="protein sequence ID" value="F25H9.4.1"/>
    <property type="gene ID" value="WBGene00009137"/>
</dbReference>
<dbReference type="GeneID" id="179827"/>
<dbReference type="KEGG" id="cel:CELE_F25H9.4"/>
<dbReference type="UCSC" id="F25H9.4">
    <property type="organism name" value="c. elegans"/>
</dbReference>
<dbReference type="AGR" id="WB:WBGene00009137"/>
<dbReference type="CTD" id="179827"/>
<dbReference type="WormBase" id="F25H9.4">
    <property type="protein sequence ID" value="CE47750"/>
    <property type="gene ID" value="WBGene00009137"/>
    <property type="gene designation" value="bath-39"/>
</dbReference>
<dbReference type="eggNOG" id="ENOG502TIY6">
    <property type="taxonomic scope" value="Eukaryota"/>
</dbReference>
<dbReference type="GeneTree" id="ENSGT00970000196035"/>
<dbReference type="HOGENOM" id="CLU_832185_0_0_1"/>
<dbReference type="InParanoid" id="P90846"/>
<dbReference type="OMA" id="CSCKRNH"/>
<dbReference type="OrthoDB" id="5825648at2759"/>
<dbReference type="PhylomeDB" id="P90846"/>
<dbReference type="PRO" id="PR:P90846"/>
<dbReference type="Proteomes" id="UP000001940">
    <property type="component" value="Chromosome V"/>
</dbReference>
<dbReference type="Bgee" id="WBGene00009137">
    <property type="expression patterns" value="Expressed in embryo and 3 other cell types or tissues"/>
</dbReference>
<dbReference type="CDD" id="cd00121">
    <property type="entry name" value="MATH"/>
    <property type="match status" value="1"/>
</dbReference>
<dbReference type="Gene3D" id="2.60.210.10">
    <property type="entry name" value="Apoptosis, Tumor Necrosis Factor Receptor Associated Protein 2, Chain A"/>
    <property type="match status" value="1"/>
</dbReference>
<dbReference type="Gene3D" id="3.30.710.10">
    <property type="entry name" value="Potassium Channel Kv1.1, Chain A"/>
    <property type="match status" value="1"/>
</dbReference>
<dbReference type="InterPro" id="IPR000210">
    <property type="entry name" value="BTB/POZ_dom"/>
</dbReference>
<dbReference type="InterPro" id="IPR002083">
    <property type="entry name" value="MATH/TRAF_dom"/>
</dbReference>
<dbReference type="InterPro" id="IPR011333">
    <property type="entry name" value="SKP1/BTB/POZ_sf"/>
</dbReference>
<dbReference type="InterPro" id="IPR008974">
    <property type="entry name" value="TRAF-like"/>
</dbReference>
<dbReference type="PANTHER" id="PTHR47022">
    <property type="entry name" value="BTB AND MATH DOMAIN-CONTAINING PROTEIN 36-RELATED"/>
    <property type="match status" value="1"/>
</dbReference>
<dbReference type="PANTHER" id="PTHR47022:SF3">
    <property type="entry name" value="BTB AND MATH DOMAIN-CONTAINING PROTEIN 39"/>
    <property type="match status" value="1"/>
</dbReference>
<dbReference type="Pfam" id="PF00651">
    <property type="entry name" value="BTB"/>
    <property type="match status" value="1"/>
</dbReference>
<dbReference type="Pfam" id="PF22486">
    <property type="entry name" value="MATH_2"/>
    <property type="match status" value="1"/>
</dbReference>
<dbReference type="SMART" id="SM00225">
    <property type="entry name" value="BTB"/>
    <property type="match status" value="1"/>
</dbReference>
<dbReference type="SMART" id="SM00061">
    <property type="entry name" value="MATH"/>
    <property type="match status" value="1"/>
</dbReference>
<dbReference type="SUPFAM" id="SSF54695">
    <property type="entry name" value="POZ domain"/>
    <property type="match status" value="1"/>
</dbReference>
<dbReference type="SUPFAM" id="SSF49599">
    <property type="entry name" value="TRAF domain-like"/>
    <property type="match status" value="1"/>
</dbReference>
<dbReference type="PROSITE" id="PS50144">
    <property type="entry name" value="MATH"/>
    <property type="match status" value="1"/>
</dbReference>
<accession>P90846</accession>
<organism>
    <name type="scientific">Caenorhabditis elegans</name>
    <dbReference type="NCBI Taxonomy" id="6239"/>
    <lineage>
        <taxon>Eukaryota</taxon>
        <taxon>Metazoa</taxon>
        <taxon>Ecdysozoa</taxon>
        <taxon>Nematoda</taxon>
        <taxon>Chromadorea</taxon>
        <taxon>Rhabditida</taxon>
        <taxon>Rhabditina</taxon>
        <taxon>Rhabditomorpha</taxon>
        <taxon>Rhabditoidea</taxon>
        <taxon>Rhabditidae</taxon>
        <taxon>Peloderinae</taxon>
        <taxon>Caenorhabditis</taxon>
    </lineage>
</organism>
<name>BAT39_CAEEL</name>
<evidence type="ECO:0000255" key="1">
    <source>
        <dbReference type="PROSITE-ProRule" id="PRU00129"/>
    </source>
</evidence>
<keyword id="KW-1185">Reference proteome</keyword>